<feature type="chain" id="PRO_1000216228" description="Small heat shock protein IbpA">
    <location>
        <begin position="1"/>
        <end position="137"/>
    </location>
</feature>
<feature type="domain" description="sHSP" evidence="2">
    <location>
        <begin position="28"/>
        <end position="137"/>
    </location>
</feature>
<accession>C6DGL0</accession>
<proteinExistence type="inferred from homology"/>
<gene>
    <name evidence="1" type="primary">ibpA</name>
    <name type="ordered locus">PC1_0034</name>
</gene>
<dbReference type="EMBL" id="CP001657">
    <property type="protein sequence ID" value="ACT11097.1"/>
    <property type="molecule type" value="Genomic_DNA"/>
</dbReference>
<dbReference type="RefSeq" id="WP_005976748.1">
    <property type="nucleotide sequence ID" value="NC_012917.1"/>
</dbReference>
<dbReference type="SMR" id="C6DGL0"/>
<dbReference type="STRING" id="561230.PC1_0034"/>
<dbReference type="GeneID" id="93392371"/>
<dbReference type="KEGG" id="pct:PC1_0034"/>
<dbReference type="eggNOG" id="COG0071">
    <property type="taxonomic scope" value="Bacteria"/>
</dbReference>
<dbReference type="HOGENOM" id="CLU_046737_4_2_6"/>
<dbReference type="OrthoDB" id="6871152at2"/>
<dbReference type="Proteomes" id="UP000002736">
    <property type="component" value="Chromosome"/>
</dbReference>
<dbReference type="GO" id="GO:0005737">
    <property type="term" value="C:cytoplasm"/>
    <property type="evidence" value="ECO:0007669"/>
    <property type="project" value="UniProtKB-SubCell"/>
</dbReference>
<dbReference type="GO" id="GO:0050821">
    <property type="term" value="P:protein stabilization"/>
    <property type="evidence" value="ECO:0007669"/>
    <property type="project" value="UniProtKB-UniRule"/>
</dbReference>
<dbReference type="CDD" id="cd06470">
    <property type="entry name" value="ACD_IbpA-B_like"/>
    <property type="match status" value="1"/>
</dbReference>
<dbReference type="FunFam" id="2.60.40.790:FF:000002">
    <property type="entry name" value="Small heat shock protein IbpA"/>
    <property type="match status" value="1"/>
</dbReference>
<dbReference type="Gene3D" id="2.60.40.790">
    <property type="match status" value="1"/>
</dbReference>
<dbReference type="HAMAP" id="MF_02000">
    <property type="entry name" value="HSP20_IbpA"/>
    <property type="match status" value="1"/>
</dbReference>
<dbReference type="InterPro" id="IPR002068">
    <property type="entry name" value="A-crystallin/Hsp20_dom"/>
</dbReference>
<dbReference type="InterPro" id="IPR037913">
    <property type="entry name" value="ACD_IbpA/B"/>
</dbReference>
<dbReference type="InterPro" id="IPR008978">
    <property type="entry name" value="HSP20-like_chaperone"/>
</dbReference>
<dbReference type="InterPro" id="IPR023728">
    <property type="entry name" value="HSP20_IbpA"/>
</dbReference>
<dbReference type="NCBIfam" id="NF008013">
    <property type="entry name" value="PRK10743.1"/>
    <property type="match status" value="1"/>
</dbReference>
<dbReference type="PANTHER" id="PTHR47062">
    <property type="match status" value="1"/>
</dbReference>
<dbReference type="PANTHER" id="PTHR47062:SF1">
    <property type="entry name" value="SMALL HEAT SHOCK PROTEIN IBPA"/>
    <property type="match status" value="1"/>
</dbReference>
<dbReference type="Pfam" id="PF00011">
    <property type="entry name" value="HSP20"/>
    <property type="match status" value="1"/>
</dbReference>
<dbReference type="SUPFAM" id="SSF49764">
    <property type="entry name" value="HSP20-like chaperones"/>
    <property type="match status" value="1"/>
</dbReference>
<dbReference type="PROSITE" id="PS01031">
    <property type="entry name" value="SHSP"/>
    <property type="match status" value="1"/>
</dbReference>
<sequence length="137" mass="15620">MRNPDFSPLYRSAIGFDRLFNLLETGQTQSNGGYPPYNVELVDENQYRIAIAVAGFAEQELDITAHDNLLIVKGAHAGEQVARNYLYQGIAERNFERKFQLAEHIQVKGANLENGLLYIDLERIVPEAMKPRRIEIK</sequence>
<keyword id="KW-0143">Chaperone</keyword>
<keyword id="KW-0963">Cytoplasm</keyword>
<keyword id="KW-0346">Stress response</keyword>
<organism>
    <name type="scientific">Pectobacterium carotovorum subsp. carotovorum (strain PC1)</name>
    <dbReference type="NCBI Taxonomy" id="561230"/>
    <lineage>
        <taxon>Bacteria</taxon>
        <taxon>Pseudomonadati</taxon>
        <taxon>Pseudomonadota</taxon>
        <taxon>Gammaproteobacteria</taxon>
        <taxon>Enterobacterales</taxon>
        <taxon>Pectobacteriaceae</taxon>
        <taxon>Pectobacterium</taxon>
    </lineage>
</organism>
<name>IBPA_PECCP</name>
<evidence type="ECO:0000255" key="1">
    <source>
        <dbReference type="HAMAP-Rule" id="MF_02000"/>
    </source>
</evidence>
<evidence type="ECO:0000255" key="2">
    <source>
        <dbReference type="PROSITE-ProRule" id="PRU00285"/>
    </source>
</evidence>
<comment type="function">
    <text evidence="1">Associates with aggregated proteins, together with IbpB, to stabilize and protect them from irreversible denaturation and extensive proteolysis during heat shock and oxidative stress. Aggregated proteins bound to the IbpAB complex are more efficiently refolded and reactivated by the ATP-dependent chaperone systems ClpB and DnaK/DnaJ/GrpE. Its activity is ATP-independent.</text>
</comment>
<comment type="subunit">
    <text evidence="1">Monomer. Forms homomultimers of about 100-150 subunits at optimal growth temperatures. Conformation changes to monomers at high temperatures or high ionic concentrations.</text>
</comment>
<comment type="subcellular location">
    <subcellularLocation>
        <location evidence="1">Cytoplasm</location>
    </subcellularLocation>
</comment>
<comment type="similarity">
    <text evidence="1 2">Belongs to the small heat shock protein (HSP20) family.</text>
</comment>
<protein>
    <recommendedName>
        <fullName evidence="1">Small heat shock protein IbpA</fullName>
    </recommendedName>
    <alternativeName>
        <fullName evidence="1">16 kDa heat shock protein A</fullName>
    </alternativeName>
</protein>
<reference key="1">
    <citation type="submission" date="2009-07" db="EMBL/GenBank/DDBJ databases">
        <title>Complete sequence of Pectobacterium carotovorum subsp. carotovorum PC1.</title>
        <authorList>
            <consortium name="US DOE Joint Genome Institute"/>
            <person name="Lucas S."/>
            <person name="Copeland A."/>
            <person name="Lapidus A."/>
            <person name="Glavina del Rio T."/>
            <person name="Tice H."/>
            <person name="Bruce D."/>
            <person name="Goodwin L."/>
            <person name="Pitluck S."/>
            <person name="Munk A.C."/>
            <person name="Brettin T."/>
            <person name="Detter J.C."/>
            <person name="Han C."/>
            <person name="Tapia R."/>
            <person name="Larimer F."/>
            <person name="Land M."/>
            <person name="Hauser L."/>
            <person name="Kyrpides N."/>
            <person name="Mikhailova N."/>
            <person name="Balakrishnan V."/>
            <person name="Glasner J."/>
            <person name="Perna N.T."/>
        </authorList>
    </citation>
    <scope>NUCLEOTIDE SEQUENCE [LARGE SCALE GENOMIC DNA]</scope>
    <source>
        <strain>PC1</strain>
    </source>
</reference>